<sequence length="144" mass="15447">MKLNELKPATGSRSKRLRKGRGLSSGHGFTSGRGTKGQKAHGKTRLGFEGGQMPLYRQIPKRGFTNINRKEYAIVNLASLNKFDDGTEVTPQLLMESGLVKNLKSGIKVLGSGKLEKKLTVKANKFSASAVSAIEAAGGKTEVM</sequence>
<protein>
    <recommendedName>
        <fullName evidence="1">Large ribosomal subunit protein uL15</fullName>
    </recommendedName>
    <alternativeName>
        <fullName evidence="3">50S ribosomal protein L15</fullName>
    </alternativeName>
</protein>
<reference key="1">
    <citation type="journal article" date="2008" name="DNA Res.">
        <title>Comparative genome analysis of Lactobacillus reuteri and Lactobacillus fermentum reveal a genomic island for reuterin and cobalamin production.</title>
        <authorList>
            <person name="Morita H."/>
            <person name="Toh H."/>
            <person name="Fukuda S."/>
            <person name="Horikawa H."/>
            <person name="Oshima K."/>
            <person name="Suzuki T."/>
            <person name="Murakami M."/>
            <person name="Hisamatsu S."/>
            <person name="Kato Y."/>
            <person name="Takizawa T."/>
            <person name="Fukuoka H."/>
            <person name="Yoshimura T."/>
            <person name="Itoh K."/>
            <person name="O'Sullivan D.J."/>
            <person name="McKay L.L."/>
            <person name="Ohno H."/>
            <person name="Kikuchi J."/>
            <person name="Masaoka T."/>
            <person name="Hattori M."/>
        </authorList>
    </citation>
    <scope>NUCLEOTIDE SEQUENCE [LARGE SCALE GENOMIC DNA]</scope>
    <source>
        <strain>JCM 1112</strain>
    </source>
</reference>
<accession>B2G8V9</accession>
<evidence type="ECO:0000255" key="1">
    <source>
        <dbReference type="HAMAP-Rule" id="MF_01341"/>
    </source>
</evidence>
<evidence type="ECO:0000256" key="2">
    <source>
        <dbReference type="SAM" id="MobiDB-lite"/>
    </source>
</evidence>
<evidence type="ECO:0000305" key="3"/>
<gene>
    <name evidence="1" type="primary">rplO</name>
    <name type="ordered locus">LAR_1375</name>
</gene>
<feature type="chain" id="PRO_1000142834" description="Large ribosomal subunit protein uL15">
    <location>
        <begin position="1"/>
        <end position="144"/>
    </location>
</feature>
<feature type="region of interest" description="Disordered" evidence="2">
    <location>
        <begin position="1"/>
        <end position="51"/>
    </location>
</feature>
<feature type="compositionally biased region" description="Gly residues" evidence="2">
    <location>
        <begin position="23"/>
        <end position="35"/>
    </location>
</feature>
<keyword id="KW-0687">Ribonucleoprotein</keyword>
<keyword id="KW-0689">Ribosomal protein</keyword>
<keyword id="KW-0694">RNA-binding</keyword>
<keyword id="KW-0699">rRNA-binding</keyword>
<comment type="function">
    <text evidence="1">Binds to the 23S rRNA.</text>
</comment>
<comment type="subunit">
    <text evidence="1">Part of the 50S ribosomal subunit.</text>
</comment>
<comment type="similarity">
    <text evidence="1">Belongs to the universal ribosomal protein uL15 family.</text>
</comment>
<organism>
    <name type="scientific">Limosilactobacillus reuteri subsp. reuteri (strain JCM 1112)</name>
    <name type="common">Lactobacillus reuteri</name>
    <dbReference type="NCBI Taxonomy" id="557433"/>
    <lineage>
        <taxon>Bacteria</taxon>
        <taxon>Bacillati</taxon>
        <taxon>Bacillota</taxon>
        <taxon>Bacilli</taxon>
        <taxon>Lactobacillales</taxon>
        <taxon>Lactobacillaceae</taxon>
        <taxon>Limosilactobacillus</taxon>
    </lineage>
</organism>
<proteinExistence type="inferred from homology"/>
<name>RL15_LIMRJ</name>
<dbReference type="EMBL" id="AP007281">
    <property type="protein sequence ID" value="BAG25891.1"/>
    <property type="molecule type" value="Genomic_DNA"/>
</dbReference>
<dbReference type="RefSeq" id="WP_003668782.1">
    <property type="nucleotide sequence ID" value="NC_010609.1"/>
</dbReference>
<dbReference type="SMR" id="B2G8V9"/>
<dbReference type="KEGG" id="lrf:LAR_1375"/>
<dbReference type="HOGENOM" id="CLU_055188_4_2_9"/>
<dbReference type="GO" id="GO:0022625">
    <property type="term" value="C:cytosolic large ribosomal subunit"/>
    <property type="evidence" value="ECO:0007669"/>
    <property type="project" value="TreeGrafter"/>
</dbReference>
<dbReference type="GO" id="GO:0019843">
    <property type="term" value="F:rRNA binding"/>
    <property type="evidence" value="ECO:0007669"/>
    <property type="project" value="UniProtKB-UniRule"/>
</dbReference>
<dbReference type="GO" id="GO:0003735">
    <property type="term" value="F:structural constituent of ribosome"/>
    <property type="evidence" value="ECO:0007669"/>
    <property type="project" value="InterPro"/>
</dbReference>
<dbReference type="GO" id="GO:0006412">
    <property type="term" value="P:translation"/>
    <property type="evidence" value="ECO:0007669"/>
    <property type="project" value="UniProtKB-UniRule"/>
</dbReference>
<dbReference type="FunFam" id="3.100.10.10:FF:000004">
    <property type="entry name" value="50S ribosomal protein L15"/>
    <property type="match status" value="1"/>
</dbReference>
<dbReference type="Gene3D" id="3.100.10.10">
    <property type="match status" value="1"/>
</dbReference>
<dbReference type="HAMAP" id="MF_01341">
    <property type="entry name" value="Ribosomal_uL15"/>
    <property type="match status" value="1"/>
</dbReference>
<dbReference type="InterPro" id="IPR030878">
    <property type="entry name" value="Ribosomal_uL15"/>
</dbReference>
<dbReference type="InterPro" id="IPR021131">
    <property type="entry name" value="Ribosomal_uL15/eL18"/>
</dbReference>
<dbReference type="InterPro" id="IPR036227">
    <property type="entry name" value="Ribosomal_uL15/eL18_sf"/>
</dbReference>
<dbReference type="InterPro" id="IPR005749">
    <property type="entry name" value="Ribosomal_uL15_bac-type"/>
</dbReference>
<dbReference type="InterPro" id="IPR001196">
    <property type="entry name" value="Ribosomal_uL15_CS"/>
</dbReference>
<dbReference type="NCBIfam" id="TIGR01071">
    <property type="entry name" value="rplO_bact"/>
    <property type="match status" value="1"/>
</dbReference>
<dbReference type="PANTHER" id="PTHR12934">
    <property type="entry name" value="50S RIBOSOMAL PROTEIN L15"/>
    <property type="match status" value="1"/>
</dbReference>
<dbReference type="PANTHER" id="PTHR12934:SF11">
    <property type="entry name" value="LARGE RIBOSOMAL SUBUNIT PROTEIN UL15M"/>
    <property type="match status" value="1"/>
</dbReference>
<dbReference type="Pfam" id="PF00828">
    <property type="entry name" value="Ribosomal_L27A"/>
    <property type="match status" value="1"/>
</dbReference>
<dbReference type="SUPFAM" id="SSF52080">
    <property type="entry name" value="Ribosomal proteins L15p and L18e"/>
    <property type="match status" value="1"/>
</dbReference>
<dbReference type="PROSITE" id="PS00475">
    <property type="entry name" value="RIBOSOMAL_L15"/>
    <property type="match status" value="1"/>
</dbReference>